<evidence type="ECO:0000255" key="1">
    <source>
        <dbReference type="HAMAP-Rule" id="MF_00247"/>
    </source>
</evidence>
<proteinExistence type="inferred from homology"/>
<gene>
    <name evidence="1" type="primary">sthA</name>
    <name evidence="1" type="synonym">udhA</name>
    <name type="ordered locus">ECA4242</name>
</gene>
<keyword id="KW-0963">Cytoplasm</keyword>
<keyword id="KW-0274">FAD</keyword>
<keyword id="KW-0285">Flavoprotein</keyword>
<keyword id="KW-0520">NAD</keyword>
<keyword id="KW-0521">NADP</keyword>
<keyword id="KW-0560">Oxidoreductase</keyword>
<keyword id="KW-1185">Reference proteome</keyword>
<comment type="function">
    <text evidence="1">Conversion of NADPH, generated by peripheral catabolic pathways, to NADH, which can enter the respiratory chain for energy generation.</text>
</comment>
<comment type="catalytic activity">
    <reaction evidence="1">
        <text>NAD(+) + NADPH = NADH + NADP(+)</text>
        <dbReference type="Rhea" id="RHEA:11692"/>
        <dbReference type="ChEBI" id="CHEBI:57540"/>
        <dbReference type="ChEBI" id="CHEBI:57783"/>
        <dbReference type="ChEBI" id="CHEBI:57945"/>
        <dbReference type="ChEBI" id="CHEBI:58349"/>
        <dbReference type="EC" id="1.6.1.1"/>
    </reaction>
</comment>
<comment type="cofactor">
    <cofactor evidence="1">
        <name>FAD</name>
        <dbReference type="ChEBI" id="CHEBI:57692"/>
    </cofactor>
    <text evidence="1">Binds 1 FAD per subunit.</text>
</comment>
<comment type="subcellular location">
    <subcellularLocation>
        <location evidence="1">Cytoplasm</location>
    </subcellularLocation>
</comment>
<comment type="similarity">
    <text evidence="1">Belongs to the class-I pyridine nucleotide-disulfide oxidoreductase family.</text>
</comment>
<protein>
    <recommendedName>
        <fullName evidence="1">Soluble pyridine nucleotide transhydrogenase</fullName>
        <shortName evidence="1">STH</shortName>
        <ecNumber evidence="1">1.6.1.1</ecNumber>
    </recommendedName>
    <alternativeName>
        <fullName evidence="1">NAD(P)(+) transhydrogenase [B-specific]</fullName>
    </alternativeName>
</protein>
<reference key="1">
    <citation type="journal article" date="2004" name="Proc. Natl. Acad. Sci. U.S.A.">
        <title>Genome sequence of the enterobacterial phytopathogen Erwinia carotovora subsp. atroseptica and characterization of virulence factors.</title>
        <authorList>
            <person name="Bell K.S."/>
            <person name="Sebaihia M."/>
            <person name="Pritchard L."/>
            <person name="Holden M.T.G."/>
            <person name="Hyman L.J."/>
            <person name="Holeva M.C."/>
            <person name="Thomson N.R."/>
            <person name="Bentley S.D."/>
            <person name="Churcher L.J.C."/>
            <person name="Mungall K."/>
            <person name="Atkin R."/>
            <person name="Bason N."/>
            <person name="Brooks K."/>
            <person name="Chillingworth T."/>
            <person name="Clark K."/>
            <person name="Doggett J."/>
            <person name="Fraser A."/>
            <person name="Hance Z."/>
            <person name="Hauser H."/>
            <person name="Jagels K."/>
            <person name="Moule S."/>
            <person name="Norbertczak H."/>
            <person name="Ormond D."/>
            <person name="Price C."/>
            <person name="Quail M.A."/>
            <person name="Sanders M."/>
            <person name="Walker D."/>
            <person name="Whitehead S."/>
            <person name="Salmond G.P.C."/>
            <person name="Birch P.R.J."/>
            <person name="Parkhill J."/>
            <person name="Toth I.K."/>
        </authorList>
    </citation>
    <scope>NUCLEOTIDE SEQUENCE [LARGE SCALE GENOMIC DNA]</scope>
    <source>
        <strain>SCRI 1043 / ATCC BAA-672</strain>
    </source>
</reference>
<accession>Q6CZB1</accession>
<name>STHA_PECAS</name>
<feature type="chain" id="PRO_0000260233" description="Soluble pyridine nucleotide transhydrogenase">
    <location>
        <begin position="1"/>
        <end position="468"/>
    </location>
</feature>
<feature type="binding site" evidence="1">
    <location>
        <begin position="38"/>
        <end position="47"/>
    </location>
    <ligand>
        <name>FAD</name>
        <dbReference type="ChEBI" id="CHEBI:57692"/>
    </ligand>
</feature>
<sequence length="468" mass="51554">MTLEHQFDYDAIIIGSGPGGEGAAMGLAKHGAKIAVIERHYNVGGGCTHWGTIPSKALRHAVSRIIEFNQNPLYSDNSRIIRSSFSDILRHADSVIGQQTRMRQGFYERNQCELFSGEASFIDAHTIAVHYPDNTHETLTAANIIIATGSRPYHPAEVDFNHPRIYDSDSILQLDHEPQHVIIYGAGVIGCEYASIFRGLSVKVDLINTRDRLLAFLDQEMSDALSYHFWNNGVVIRHNEEFDSIEGLSDGVIVNLKSGKKMKADCLLYANGRTGNTETLGLENIGLSTDSRGQLKVNSMYQTALAHIYAIGDVIGYPSLASAAYDQGRLAAQAIIKGDASAHLIEDIPTGIYTIPEISSVGKTEQELTAMKVPYEVGRAQFKHLARAQIVGMNVGSLKILFHRETKQILGIHCFGERAAEIIHIGQAIMEQKGEGNTIEYFVNTTFNYPTMAEAYRVAALNGLNRLF</sequence>
<organism>
    <name type="scientific">Pectobacterium atrosepticum (strain SCRI 1043 / ATCC BAA-672)</name>
    <name type="common">Erwinia carotovora subsp. atroseptica</name>
    <dbReference type="NCBI Taxonomy" id="218491"/>
    <lineage>
        <taxon>Bacteria</taxon>
        <taxon>Pseudomonadati</taxon>
        <taxon>Pseudomonadota</taxon>
        <taxon>Gammaproteobacteria</taxon>
        <taxon>Enterobacterales</taxon>
        <taxon>Pectobacteriaceae</taxon>
        <taxon>Pectobacterium</taxon>
    </lineage>
</organism>
<dbReference type="EC" id="1.6.1.1" evidence="1"/>
<dbReference type="EMBL" id="BX950851">
    <property type="protein sequence ID" value="CAG77139.1"/>
    <property type="molecule type" value="Genomic_DNA"/>
</dbReference>
<dbReference type="RefSeq" id="WP_011095713.1">
    <property type="nucleotide sequence ID" value="NC_004547.2"/>
</dbReference>
<dbReference type="SMR" id="Q6CZB1"/>
<dbReference type="STRING" id="218491.ECA4242"/>
<dbReference type="KEGG" id="eca:ECA4242"/>
<dbReference type="PATRIC" id="fig|218491.5.peg.4319"/>
<dbReference type="eggNOG" id="COG1249">
    <property type="taxonomic scope" value="Bacteria"/>
</dbReference>
<dbReference type="HOGENOM" id="CLU_016755_0_0_6"/>
<dbReference type="OrthoDB" id="9800167at2"/>
<dbReference type="Proteomes" id="UP000007966">
    <property type="component" value="Chromosome"/>
</dbReference>
<dbReference type="GO" id="GO:0005829">
    <property type="term" value="C:cytosol"/>
    <property type="evidence" value="ECO:0007669"/>
    <property type="project" value="TreeGrafter"/>
</dbReference>
<dbReference type="GO" id="GO:0004148">
    <property type="term" value="F:dihydrolipoyl dehydrogenase (NADH) activity"/>
    <property type="evidence" value="ECO:0007669"/>
    <property type="project" value="TreeGrafter"/>
</dbReference>
<dbReference type="GO" id="GO:0050660">
    <property type="term" value="F:flavin adenine dinucleotide binding"/>
    <property type="evidence" value="ECO:0007669"/>
    <property type="project" value="TreeGrafter"/>
</dbReference>
<dbReference type="GO" id="GO:0003957">
    <property type="term" value="F:NAD(P)+ transhydrogenase (Si-specific) activity"/>
    <property type="evidence" value="ECO:0007669"/>
    <property type="project" value="UniProtKB-UniRule"/>
</dbReference>
<dbReference type="GO" id="GO:0006103">
    <property type="term" value="P:2-oxoglutarate metabolic process"/>
    <property type="evidence" value="ECO:0007669"/>
    <property type="project" value="TreeGrafter"/>
</dbReference>
<dbReference type="GO" id="GO:0006739">
    <property type="term" value="P:NADP metabolic process"/>
    <property type="evidence" value="ECO:0007669"/>
    <property type="project" value="UniProtKB-UniRule"/>
</dbReference>
<dbReference type="FunFam" id="3.30.390.30:FF:000002">
    <property type="entry name" value="Soluble pyridine nucleotide transhydrogenase"/>
    <property type="match status" value="1"/>
</dbReference>
<dbReference type="FunFam" id="3.50.50.60:FF:000008">
    <property type="entry name" value="Soluble pyridine nucleotide transhydrogenase"/>
    <property type="match status" value="1"/>
</dbReference>
<dbReference type="Gene3D" id="3.30.390.30">
    <property type="match status" value="1"/>
</dbReference>
<dbReference type="Gene3D" id="3.50.50.60">
    <property type="entry name" value="FAD/NAD(P)-binding domain"/>
    <property type="match status" value="2"/>
</dbReference>
<dbReference type="HAMAP" id="MF_00247">
    <property type="entry name" value="SthA"/>
    <property type="match status" value="1"/>
</dbReference>
<dbReference type="InterPro" id="IPR050151">
    <property type="entry name" value="Class-I_Pyr_Nuc-Dis_Oxidored"/>
</dbReference>
<dbReference type="InterPro" id="IPR036188">
    <property type="entry name" value="FAD/NAD-bd_sf"/>
</dbReference>
<dbReference type="InterPro" id="IPR023753">
    <property type="entry name" value="FAD/NAD-binding_dom"/>
</dbReference>
<dbReference type="InterPro" id="IPR016156">
    <property type="entry name" value="FAD/NAD-linked_Rdtase_dimer_sf"/>
</dbReference>
<dbReference type="InterPro" id="IPR001100">
    <property type="entry name" value="Pyr_nuc-diS_OxRdtase"/>
</dbReference>
<dbReference type="InterPro" id="IPR004099">
    <property type="entry name" value="Pyr_nucl-diS_OxRdtase_dimer"/>
</dbReference>
<dbReference type="InterPro" id="IPR022962">
    <property type="entry name" value="STH_gammaproteobact"/>
</dbReference>
<dbReference type="NCBIfam" id="NF003585">
    <property type="entry name" value="PRK05249.1"/>
    <property type="match status" value="1"/>
</dbReference>
<dbReference type="PANTHER" id="PTHR22912">
    <property type="entry name" value="DISULFIDE OXIDOREDUCTASE"/>
    <property type="match status" value="1"/>
</dbReference>
<dbReference type="PANTHER" id="PTHR22912:SF93">
    <property type="entry name" value="SOLUBLE PYRIDINE NUCLEOTIDE TRANSHYDROGENASE"/>
    <property type="match status" value="1"/>
</dbReference>
<dbReference type="Pfam" id="PF07992">
    <property type="entry name" value="Pyr_redox_2"/>
    <property type="match status" value="1"/>
</dbReference>
<dbReference type="Pfam" id="PF02852">
    <property type="entry name" value="Pyr_redox_dim"/>
    <property type="match status" value="1"/>
</dbReference>
<dbReference type="PIRSF" id="PIRSF000350">
    <property type="entry name" value="Mercury_reductase_MerA"/>
    <property type="match status" value="1"/>
</dbReference>
<dbReference type="PRINTS" id="PR00368">
    <property type="entry name" value="FADPNR"/>
</dbReference>
<dbReference type="PRINTS" id="PR00411">
    <property type="entry name" value="PNDRDTASEI"/>
</dbReference>
<dbReference type="SUPFAM" id="SSF51905">
    <property type="entry name" value="FAD/NAD(P)-binding domain"/>
    <property type="match status" value="1"/>
</dbReference>
<dbReference type="SUPFAM" id="SSF55424">
    <property type="entry name" value="FAD/NAD-linked reductases, dimerisation (C-terminal) domain"/>
    <property type="match status" value="1"/>
</dbReference>